<feature type="chain" id="PRO_0000436051" description="Diadenylate cyclase">
    <location>
        <begin position="1"/>
        <end position="273"/>
    </location>
</feature>
<feature type="transmembrane region" description="Helical" evidence="1">
    <location>
        <begin position="12"/>
        <end position="32"/>
    </location>
</feature>
<feature type="transmembrane region" description="Helical" evidence="1">
    <location>
        <begin position="37"/>
        <end position="57"/>
    </location>
</feature>
<feature type="transmembrane region" description="Helical" evidence="1">
    <location>
        <begin position="61"/>
        <end position="81"/>
    </location>
</feature>
<feature type="domain" description="DAC" evidence="2">
    <location>
        <begin position="82"/>
        <end position="242"/>
    </location>
</feature>
<gene>
    <name evidence="1" type="primary">dacA</name>
    <name type="ordered locus">LMRG_01274</name>
</gene>
<reference key="1">
    <citation type="submission" date="2010-04" db="EMBL/GenBank/DDBJ databases">
        <title>The genome sequence of Listeria monocytogenes strain 10403S.</title>
        <authorList>
            <consortium name="The Broad Institute Genome Sequencing Platform"/>
            <consortium name="The Broad Institute Genome Sequencing Center for Infectious Disease"/>
            <person name="Borowsky M."/>
            <person name="Borodovsky M."/>
            <person name="Young S.K."/>
            <person name="Zeng Q."/>
            <person name="Koehrsen M."/>
            <person name="Fitzgerald M."/>
            <person name="Wiedmann M."/>
            <person name="Swaminathan B."/>
            <person name="Lauer P."/>
            <person name="Portnoy D."/>
            <person name="Cossart P."/>
            <person name="Buchrieser C."/>
            <person name="Higgins D."/>
            <person name="Abouelleil A."/>
            <person name="Alvarado L."/>
            <person name="Arachchi H.M."/>
            <person name="Berlin A."/>
            <person name="Borenstein D."/>
            <person name="Brown A."/>
            <person name="Chapman S.B."/>
            <person name="Chen Z."/>
            <person name="Dunbar C.D."/>
            <person name="Engels R."/>
            <person name="Freedman E."/>
            <person name="Gearin G."/>
            <person name="Gellesch M."/>
            <person name="Goldberg J."/>
            <person name="Griggs A."/>
            <person name="Gujja S."/>
            <person name="Heilman E."/>
            <person name="Heiman D."/>
            <person name="Howarth C."/>
            <person name="Jen D."/>
            <person name="Larson L."/>
            <person name="Lui A."/>
            <person name="MacDonald J."/>
            <person name="Mehta T."/>
            <person name="Montmayeur A."/>
            <person name="Neiman D."/>
            <person name="Park D."/>
            <person name="Pearson M."/>
            <person name="Priest M."/>
            <person name="Richards J."/>
            <person name="Roberts A."/>
            <person name="Saif S."/>
            <person name="Shea T."/>
            <person name="Shenoy N."/>
            <person name="Sisk P."/>
            <person name="Stolte C."/>
            <person name="Sykes S."/>
            <person name="Walk T."/>
            <person name="White J."/>
            <person name="Yandava C."/>
            <person name="Haas B."/>
            <person name="Nusbaum C."/>
            <person name="Birren B."/>
        </authorList>
    </citation>
    <scope>NUCLEOTIDE SEQUENCE [LARGE SCALE GENOMIC DNA]</scope>
    <source>
        <strain>10403S</strain>
    </source>
</reference>
<reference key="2">
    <citation type="journal article" date="2013" name="MBio">
        <title>Cyclic di-AMP is critical for Listeria monocytogenes growth, cell wall homeostasis, and establishment of infection.</title>
        <authorList>
            <person name="Witte C.E."/>
            <person name="Whiteley A.T."/>
            <person name="Burke T.P."/>
            <person name="Sauer J.D."/>
            <person name="Portnoy D.A."/>
            <person name="Woodward J.J."/>
        </authorList>
    </citation>
    <scope>FUNCTION</scope>
    <scope>DISRUPTION PHENOTYPE</scope>
    <source>
        <strain>10403S</strain>
    </source>
</reference>
<reference key="3">
    <citation type="journal article" date="2015" name="J. Am. Chem. Soc.">
        <title>RNA-based fluorescent biosensors for live cell imaging of second messenger cyclic di-AMP.</title>
        <authorList>
            <person name="Kellenberger C.A."/>
            <person name="Chen C."/>
            <person name="Whiteley A.T."/>
            <person name="Portnoy D.A."/>
            <person name="Hammond M.C."/>
        </authorList>
    </citation>
    <scope>DISRUPTION PHENOTYPE</scope>
    <source>
        <strain>10403S</strain>
    </source>
</reference>
<protein>
    <recommendedName>
        <fullName evidence="1">Diadenylate cyclase</fullName>
        <shortName evidence="1">DAC</shortName>
        <ecNumber evidence="1">2.7.7.85</ecNumber>
    </recommendedName>
    <alternativeName>
        <fullName evidence="1">Cyclic-di-AMP synthase</fullName>
        <shortName evidence="1">c-di-AMP synthase</shortName>
    </alternativeName>
</protein>
<evidence type="ECO:0000255" key="1">
    <source>
        <dbReference type="HAMAP-Rule" id="MF_01499"/>
    </source>
</evidence>
<evidence type="ECO:0000255" key="2">
    <source>
        <dbReference type="PROSITE-ProRule" id="PRU01130"/>
    </source>
</evidence>
<evidence type="ECO:0000269" key="3">
    <source>
    </source>
</evidence>
<evidence type="ECO:0000269" key="4">
    <source>
    </source>
</evidence>
<evidence type="ECO:0000305" key="5">
    <source>
    </source>
</evidence>
<name>DACA_LISM4</name>
<dbReference type="EC" id="2.7.7.85" evidence="1"/>
<dbReference type="EMBL" id="CP002002">
    <property type="protein sequence ID" value="AEO07105.1"/>
    <property type="molecule type" value="Genomic_DNA"/>
</dbReference>
<dbReference type="RefSeq" id="WP_003722380.1">
    <property type="nucleotide sequence ID" value="NC_017544.1"/>
</dbReference>
<dbReference type="SMR" id="A0A0H3GM48"/>
<dbReference type="GeneID" id="87011213"/>
<dbReference type="KEGG" id="lmt:LMRG_01274"/>
<dbReference type="HOGENOM" id="CLU_038561_0_1_9"/>
<dbReference type="Proteomes" id="UP000001288">
    <property type="component" value="Chromosome"/>
</dbReference>
<dbReference type="GO" id="GO:0005886">
    <property type="term" value="C:plasma membrane"/>
    <property type="evidence" value="ECO:0007669"/>
    <property type="project" value="UniProtKB-SubCell"/>
</dbReference>
<dbReference type="GO" id="GO:0004016">
    <property type="term" value="F:adenylate cyclase activity"/>
    <property type="evidence" value="ECO:0000314"/>
    <property type="project" value="UniProtKB"/>
</dbReference>
<dbReference type="GO" id="GO:0005524">
    <property type="term" value="F:ATP binding"/>
    <property type="evidence" value="ECO:0007669"/>
    <property type="project" value="UniProtKB-UniRule"/>
</dbReference>
<dbReference type="GO" id="GO:0106408">
    <property type="term" value="F:diadenylate cyclase activity"/>
    <property type="evidence" value="ECO:0007669"/>
    <property type="project" value="UniProtKB-EC"/>
</dbReference>
<dbReference type="GO" id="GO:0006171">
    <property type="term" value="P:cAMP biosynthetic process"/>
    <property type="evidence" value="ECO:0007669"/>
    <property type="project" value="InterPro"/>
</dbReference>
<dbReference type="FunFam" id="3.40.1700.10:FF:000002">
    <property type="entry name" value="Diadenylate cyclase"/>
    <property type="match status" value="1"/>
</dbReference>
<dbReference type="Gene3D" id="3.40.1700.10">
    <property type="entry name" value="DNA integrity scanning protein, DisA, N-terminal domain"/>
    <property type="match status" value="1"/>
</dbReference>
<dbReference type="HAMAP" id="MF_01499">
    <property type="entry name" value="DacA"/>
    <property type="match status" value="1"/>
</dbReference>
<dbReference type="InterPro" id="IPR014046">
    <property type="entry name" value="C-di-AMP_synthase"/>
</dbReference>
<dbReference type="InterPro" id="IPR034701">
    <property type="entry name" value="CdaA"/>
</dbReference>
<dbReference type="InterPro" id="IPR045585">
    <property type="entry name" value="CdaA_N"/>
</dbReference>
<dbReference type="InterPro" id="IPR050338">
    <property type="entry name" value="DisA"/>
</dbReference>
<dbReference type="InterPro" id="IPR036888">
    <property type="entry name" value="DNA_integrity_DisA_N_sf"/>
</dbReference>
<dbReference type="InterPro" id="IPR003390">
    <property type="entry name" value="DNA_integrity_scan_DisA_N"/>
</dbReference>
<dbReference type="NCBIfam" id="TIGR00159">
    <property type="entry name" value="diadenylate cyclase CdaA"/>
    <property type="match status" value="1"/>
</dbReference>
<dbReference type="PANTHER" id="PTHR34185">
    <property type="entry name" value="DIADENYLATE CYCLASE"/>
    <property type="match status" value="1"/>
</dbReference>
<dbReference type="PANTHER" id="PTHR34185:SF1">
    <property type="entry name" value="DIADENYLATE CYCLASE"/>
    <property type="match status" value="1"/>
</dbReference>
<dbReference type="Pfam" id="PF19293">
    <property type="entry name" value="CdaA_N"/>
    <property type="match status" value="1"/>
</dbReference>
<dbReference type="Pfam" id="PF02457">
    <property type="entry name" value="DAC"/>
    <property type="match status" value="1"/>
</dbReference>
<dbReference type="PIRSF" id="PIRSF004793">
    <property type="entry name" value="UCP004793"/>
    <property type="match status" value="1"/>
</dbReference>
<dbReference type="SUPFAM" id="SSF143597">
    <property type="entry name" value="YojJ-like"/>
    <property type="match status" value="1"/>
</dbReference>
<dbReference type="PROSITE" id="PS51794">
    <property type="entry name" value="DAC"/>
    <property type="match status" value="1"/>
</dbReference>
<organism>
    <name type="scientific">Listeria monocytogenes serotype 1/2a (strain 10403S)</name>
    <dbReference type="NCBI Taxonomy" id="393133"/>
    <lineage>
        <taxon>Bacteria</taxon>
        <taxon>Bacillati</taxon>
        <taxon>Bacillota</taxon>
        <taxon>Bacilli</taxon>
        <taxon>Bacillales</taxon>
        <taxon>Listeriaceae</taxon>
        <taxon>Listeria</taxon>
    </lineage>
</organism>
<proteinExistence type="inferred from homology"/>
<accession>A0A0H3GM48</accession>
<comment type="function">
    <text evidence="3 5">Catalyzes the condensation of 2 ATP molecules into cyclic di-AMP (c-di-AMP), a signaling compound secreted into the host's cytosol where it triggers the cytosolic surveillance pathway (CSP), a host pathway of innate immunity characterized by expression of beta interferon (IFN-beta) and coregulated genes (Probable). Overexpression increases export of c-di-AMP (PubMed:23716572). c-di-AMP is a second messenger that mediates growth, cell wall stability and virulence (Probable).</text>
</comment>
<comment type="catalytic activity">
    <reaction evidence="1">
        <text>2 ATP = 3',3'-c-di-AMP + 2 diphosphate</text>
        <dbReference type="Rhea" id="RHEA:35655"/>
        <dbReference type="ChEBI" id="CHEBI:30616"/>
        <dbReference type="ChEBI" id="CHEBI:33019"/>
        <dbReference type="ChEBI" id="CHEBI:71500"/>
        <dbReference type="EC" id="2.7.7.85"/>
    </reaction>
</comment>
<comment type="subunit">
    <text evidence="1">Probably a homodimer.</text>
</comment>
<comment type="subcellular location">
    <subcellularLocation>
        <location evidence="1">Cell membrane</location>
        <topology evidence="1">Multi-pass membrane protein</topology>
    </subcellularLocation>
</comment>
<comment type="disruption phenotype">
    <text evidence="3 4">Essential, it cannot be deleted; in depletion experiments doubling time increases from 44 to 84 minutes, cells have decreased export of c-di-AMP, increased susceptibility to the antibiotic cefuroxime, a weakened cell wall, 10-fold lower growth in host macrophages, are about 10(3) less virulent in mice and more susceptible to in-host bacteriolysis (PubMed:23716572). In a viable dacA-relA-relP-relQ deletion mutant about 2-fold decreased intracellular levels of c-di-AMP (PubMed:25965978).</text>
</comment>
<comment type="similarity">
    <text evidence="1">Belongs to the adenylate cyclase family. DacA/CdaA subfamily.</text>
</comment>
<sequence>MDFSNMSILHYLANIVDILVVWFVIYKVIMLIRGTKAVQLLKGIFIIIAVKLLSGFFGLQTVEWITDQMLTWGFLAIIIIFQPELRRALETLGRGNIFTRYGSRIEREQHHLIESIEKSTQYMAKRRIGALISVARDTGMDDYIETGIPLNAKISSQLLINIFIPNTPLHDGAVIIKGNEIASAASYLPLSDSPFLSKELGTRHRAALGISEVTDSITIVVSEETGGISLTKGGELFRDVSEEELHKILLKELVTVTAKKPSIFSKWKGGKSE</sequence>
<keyword id="KW-0067">ATP-binding</keyword>
<keyword id="KW-1003">Cell membrane</keyword>
<keyword id="KW-0472">Membrane</keyword>
<keyword id="KW-0547">Nucleotide-binding</keyword>
<keyword id="KW-0548">Nucleotidyltransferase</keyword>
<keyword id="KW-0808">Transferase</keyword>
<keyword id="KW-0812">Transmembrane</keyword>
<keyword id="KW-1133">Transmembrane helix</keyword>